<gene>
    <name evidence="1" type="primary">nuoK</name>
    <name type="ordered locus">Sala_1299</name>
</gene>
<comment type="function">
    <text evidence="1">NDH-1 shuttles electrons from NADH, via FMN and iron-sulfur (Fe-S) centers, to quinones in the respiratory chain. The immediate electron acceptor for the enzyme in this species is believed to be ubiquinone. Couples the redox reaction to proton translocation (for every two electrons transferred, four hydrogen ions are translocated across the cytoplasmic membrane), and thus conserves the redox energy in a proton gradient.</text>
</comment>
<comment type="catalytic activity">
    <reaction evidence="1">
        <text>a quinone + NADH + 5 H(+)(in) = a quinol + NAD(+) + 4 H(+)(out)</text>
        <dbReference type="Rhea" id="RHEA:57888"/>
        <dbReference type="ChEBI" id="CHEBI:15378"/>
        <dbReference type="ChEBI" id="CHEBI:24646"/>
        <dbReference type="ChEBI" id="CHEBI:57540"/>
        <dbReference type="ChEBI" id="CHEBI:57945"/>
        <dbReference type="ChEBI" id="CHEBI:132124"/>
    </reaction>
</comment>
<comment type="subunit">
    <text evidence="1">NDH-1 is composed of 14 different subunits. Subunits NuoA, H, J, K, L, M, N constitute the membrane sector of the complex.</text>
</comment>
<comment type="subcellular location">
    <subcellularLocation>
        <location evidence="1">Cell inner membrane</location>
        <topology evidence="1">Multi-pass membrane protein</topology>
    </subcellularLocation>
</comment>
<comment type="similarity">
    <text evidence="1">Belongs to the complex I subunit 4L family.</text>
</comment>
<keyword id="KW-0997">Cell inner membrane</keyword>
<keyword id="KW-1003">Cell membrane</keyword>
<keyword id="KW-0472">Membrane</keyword>
<keyword id="KW-0520">NAD</keyword>
<keyword id="KW-0874">Quinone</keyword>
<keyword id="KW-1185">Reference proteome</keyword>
<keyword id="KW-1278">Translocase</keyword>
<keyword id="KW-0812">Transmembrane</keyword>
<keyword id="KW-1133">Transmembrane helix</keyword>
<keyword id="KW-0813">Transport</keyword>
<keyword id="KW-0830">Ubiquinone</keyword>
<name>NUOK_SPHAL</name>
<evidence type="ECO:0000255" key="1">
    <source>
        <dbReference type="HAMAP-Rule" id="MF_01456"/>
    </source>
</evidence>
<reference key="1">
    <citation type="journal article" date="2009" name="Proc. Natl. Acad. Sci. U.S.A.">
        <title>The genomic basis of trophic strategy in marine bacteria.</title>
        <authorList>
            <person name="Lauro F.M."/>
            <person name="McDougald D."/>
            <person name="Thomas T."/>
            <person name="Williams T.J."/>
            <person name="Egan S."/>
            <person name="Rice S."/>
            <person name="DeMaere M.Z."/>
            <person name="Ting L."/>
            <person name="Ertan H."/>
            <person name="Johnson J."/>
            <person name="Ferriera S."/>
            <person name="Lapidus A."/>
            <person name="Anderson I."/>
            <person name="Kyrpides N."/>
            <person name="Munk A.C."/>
            <person name="Detter C."/>
            <person name="Han C.S."/>
            <person name="Brown M.V."/>
            <person name="Robb F.T."/>
            <person name="Kjelleberg S."/>
            <person name="Cavicchioli R."/>
        </authorList>
    </citation>
    <scope>NUCLEOTIDE SEQUENCE [LARGE SCALE GENOMIC DNA]</scope>
    <source>
        <strain>DSM 13593 / LMG 18877 / RB2256</strain>
    </source>
</reference>
<feature type="chain" id="PRO_0000390247" description="NADH-quinone oxidoreductase subunit K">
    <location>
        <begin position="1"/>
        <end position="101"/>
    </location>
</feature>
<feature type="transmembrane region" description="Helical" evidence="1">
    <location>
        <begin position="4"/>
        <end position="24"/>
    </location>
</feature>
<feature type="transmembrane region" description="Helical" evidence="1">
    <location>
        <begin position="29"/>
        <end position="49"/>
    </location>
</feature>
<feature type="transmembrane region" description="Helical" evidence="1">
    <location>
        <begin position="65"/>
        <end position="85"/>
    </location>
</feature>
<protein>
    <recommendedName>
        <fullName evidence="1">NADH-quinone oxidoreductase subunit K</fullName>
        <ecNumber evidence="1">7.1.1.-</ecNumber>
    </recommendedName>
    <alternativeName>
        <fullName evidence="1">NADH dehydrogenase I subunit K</fullName>
    </alternativeName>
    <alternativeName>
        <fullName evidence="1">NDH-1 subunit K</fullName>
    </alternativeName>
</protein>
<organism>
    <name type="scientific">Sphingopyxis alaskensis (strain DSM 13593 / LMG 18877 / RB2256)</name>
    <name type="common">Sphingomonas alaskensis</name>
    <dbReference type="NCBI Taxonomy" id="317655"/>
    <lineage>
        <taxon>Bacteria</taxon>
        <taxon>Pseudomonadati</taxon>
        <taxon>Pseudomonadota</taxon>
        <taxon>Alphaproteobacteria</taxon>
        <taxon>Sphingomonadales</taxon>
        <taxon>Sphingomonadaceae</taxon>
        <taxon>Sphingopyxis</taxon>
    </lineage>
</organism>
<accession>Q1GTK9</accession>
<sequence>MISVGHYLAVSAVLFTLGVLGIFINRKNIIVILMAIELILLAVNINLVAFSAALGDLVGQVFSMFVLTVAAGEAAIGLAILVIYFRGRGTIAVDDANRMKG</sequence>
<dbReference type="EC" id="7.1.1.-" evidence="1"/>
<dbReference type="EMBL" id="CP000356">
    <property type="protein sequence ID" value="ABF53013.1"/>
    <property type="molecule type" value="Genomic_DNA"/>
</dbReference>
<dbReference type="RefSeq" id="WP_003051614.1">
    <property type="nucleotide sequence ID" value="NC_008048.1"/>
</dbReference>
<dbReference type="SMR" id="Q1GTK9"/>
<dbReference type="STRING" id="317655.Sala_1299"/>
<dbReference type="KEGG" id="sal:Sala_1299"/>
<dbReference type="eggNOG" id="COG0713">
    <property type="taxonomic scope" value="Bacteria"/>
</dbReference>
<dbReference type="HOGENOM" id="CLU_144724_2_0_5"/>
<dbReference type="OrthoDB" id="9811124at2"/>
<dbReference type="Proteomes" id="UP000006578">
    <property type="component" value="Chromosome"/>
</dbReference>
<dbReference type="GO" id="GO:0030964">
    <property type="term" value="C:NADH dehydrogenase complex"/>
    <property type="evidence" value="ECO:0007669"/>
    <property type="project" value="TreeGrafter"/>
</dbReference>
<dbReference type="GO" id="GO:0005886">
    <property type="term" value="C:plasma membrane"/>
    <property type="evidence" value="ECO:0007669"/>
    <property type="project" value="UniProtKB-SubCell"/>
</dbReference>
<dbReference type="GO" id="GO:0050136">
    <property type="term" value="F:NADH:ubiquinone reductase (non-electrogenic) activity"/>
    <property type="evidence" value="ECO:0007669"/>
    <property type="project" value="UniProtKB-UniRule"/>
</dbReference>
<dbReference type="GO" id="GO:0048038">
    <property type="term" value="F:quinone binding"/>
    <property type="evidence" value="ECO:0007669"/>
    <property type="project" value="UniProtKB-KW"/>
</dbReference>
<dbReference type="GO" id="GO:0042773">
    <property type="term" value="P:ATP synthesis coupled electron transport"/>
    <property type="evidence" value="ECO:0007669"/>
    <property type="project" value="InterPro"/>
</dbReference>
<dbReference type="FunFam" id="1.10.287.3510:FF:000001">
    <property type="entry name" value="NADH-quinone oxidoreductase subunit K"/>
    <property type="match status" value="1"/>
</dbReference>
<dbReference type="Gene3D" id="1.10.287.3510">
    <property type="match status" value="1"/>
</dbReference>
<dbReference type="HAMAP" id="MF_01456">
    <property type="entry name" value="NDH1_NuoK"/>
    <property type="match status" value="1"/>
</dbReference>
<dbReference type="InterPro" id="IPR001133">
    <property type="entry name" value="NADH_UbQ_OxRdtase_chain4L/K"/>
</dbReference>
<dbReference type="InterPro" id="IPR039428">
    <property type="entry name" value="NUOK/Mnh_C1-like"/>
</dbReference>
<dbReference type="NCBIfam" id="NF004320">
    <property type="entry name" value="PRK05715.1-2"/>
    <property type="match status" value="1"/>
</dbReference>
<dbReference type="NCBIfam" id="NF004321">
    <property type="entry name" value="PRK05715.1-3"/>
    <property type="match status" value="1"/>
</dbReference>
<dbReference type="NCBIfam" id="NF004323">
    <property type="entry name" value="PRK05715.1-5"/>
    <property type="match status" value="1"/>
</dbReference>
<dbReference type="PANTHER" id="PTHR11434:SF21">
    <property type="entry name" value="NADH DEHYDROGENASE SUBUNIT 4L-RELATED"/>
    <property type="match status" value="1"/>
</dbReference>
<dbReference type="PANTHER" id="PTHR11434">
    <property type="entry name" value="NADH-UBIQUINONE OXIDOREDUCTASE SUBUNIT ND4L"/>
    <property type="match status" value="1"/>
</dbReference>
<dbReference type="Pfam" id="PF00420">
    <property type="entry name" value="Oxidored_q2"/>
    <property type="match status" value="1"/>
</dbReference>
<proteinExistence type="inferred from homology"/>